<protein>
    <recommendedName>
        <fullName evidence="1">Putative multidrug resistance protein MdtD</fullName>
    </recommendedName>
</protein>
<keyword id="KW-0997">Cell inner membrane</keyword>
<keyword id="KW-1003">Cell membrane</keyword>
<keyword id="KW-0472">Membrane</keyword>
<keyword id="KW-0812">Transmembrane</keyword>
<keyword id="KW-1133">Transmembrane helix</keyword>
<keyword id="KW-0813">Transport</keyword>
<accession>B1IYZ7</accession>
<feature type="chain" id="PRO_1000087926" description="Putative multidrug resistance protein MdtD">
    <location>
        <begin position="1"/>
        <end position="471"/>
    </location>
</feature>
<feature type="topological domain" description="Periplasmic" evidence="1">
    <location>
        <begin position="1"/>
        <end position="11"/>
    </location>
</feature>
<feature type="transmembrane region" description="Helical" evidence="1">
    <location>
        <begin position="12"/>
        <end position="32"/>
    </location>
</feature>
<feature type="topological domain" description="Cytoplasmic" evidence="1">
    <location>
        <begin position="33"/>
        <end position="48"/>
    </location>
</feature>
<feature type="transmembrane region" description="Helical" evidence="1">
    <location>
        <begin position="49"/>
        <end position="69"/>
    </location>
</feature>
<feature type="topological domain" description="Periplasmic" evidence="1">
    <location>
        <begin position="70"/>
        <end position="76"/>
    </location>
</feature>
<feature type="transmembrane region" description="Helical" evidence="1">
    <location>
        <begin position="77"/>
        <end position="97"/>
    </location>
</feature>
<feature type="topological domain" description="Cytoplasmic" evidence="1">
    <location>
        <begin position="98"/>
        <end position="101"/>
    </location>
</feature>
<feature type="transmembrane region" description="Helical" evidence="1">
    <location>
        <begin position="102"/>
        <end position="124"/>
    </location>
</feature>
<feature type="topological domain" description="Periplasmic" evidence="1">
    <location>
        <begin position="125"/>
        <end position="137"/>
    </location>
</feature>
<feature type="transmembrane region" description="Helical" evidence="1">
    <location>
        <begin position="138"/>
        <end position="158"/>
    </location>
</feature>
<feature type="topological domain" description="Cytoplasmic" evidence="1">
    <location>
        <begin position="159"/>
        <end position="164"/>
    </location>
</feature>
<feature type="transmembrane region" description="Helical" evidence="1">
    <location>
        <begin position="165"/>
        <end position="185"/>
    </location>
</feature>
<feature type="topological domain" description="Periplasmic" evidence="1">
    <location>
        <begin position="186"/>
        <end position="196"/>
    </location>
</feature>
<feature type="transmembrane region" description="Helical" evidence="1">
    <location>
        <begin position="197"/>
        <end position="217"/>
    </location>
</feature>
<feature type="topological domain" description="Cytoplasmic" evidence="1">
    <location>
        <begin position="218"/>
        <end position="224"/>
    </location>
</feature>
<feature type="transmembrane region" description="Helical" evidence="1">
    <location>
        <begin position="225"/>
        <end position="245"/>
    </location>
</feature>
<feature type="topological domain" description="Periplasmic" evidence="1">
    <location>
        <begin position="246"/>
        <end position="262"/>
    </location>
</feature>
<feature type="transmembrane region" description="Helical" evidence="1">
    <location>
        <begin position="263"/>
        <end position="283"/>
    </location>
</feature>
<feature type="topological domain" description="Cytoplasmic" evidence="1">
    <location>
        <begin position="284"/>
        <end position="285"/>
    </location>
</feature>
<feature type="transmembrane region" description="Helical" evidence="1">
    <location>
        <begin position="286"/>
        <end position="306"/>
    </location>
</feature>
<feature type="topological domain" description="Periplasmic" evidence="1">
    <location>
        <begin position="307"/>
        <end position="341"/>
    </location>
</feature>
<feature type="transmembrane region" description="Helical" evidence="1">
    <location>
        <begin position="342"/>
        <end position="362"/>
    </location>
</feature>
<feature type="topological domain" description="Cytoplasmic" evidence="1">
    <location>
        <begin position="363"/>
        <end position="395"/>
    </location>
</feature>
<feature type="transmembrane region" description="Helical" evidence="1">
    <location>
        <begin position="396"/>
        <end position="416"/>
    </location>
</feature>
<feature type="topological domain" description="Periplasmic" evidence="1">
    <location>
        <begin position="417"/>
        <end position="430"/>
    </location>
</feature>
<feature type="transmembrane region" description="Helical" evidence="1">
    <location>
        <begin position="431"/>
        <end position="451"/>
    </location>
</feature>
<feature type="topological domain" description="Cytoplasmic" evidence="1">
    <location>
        <begin position="452"/>
        <end position="471"/>
    </location>
</feature>
<organism>
    <name type="scientific">Escherichia coli (strain ATCC 8739 / DSM 1576 / NBRC 3972 / NCIMB 8545 / WDCM 00012 / Crooks)</name>
    <dbReference type="NCBI Taxonomy" id="481805"/>
    <lineage>
        <taxon>Bacteria</taxon>
        <taxon>Pseudomonadati</taxon>
        <taxon>Pseudomonadota</taxon>
        <taxon>Gammaproteobacteria</taxon>
        <taxon>Enterobacterales</taxon>
        <taxon>Enterobacteriaceae</taxon>
        <taxon>Escherichia</taxon>
    </lineage>
</organism>
<reference key="1">
    <citation type="submission" date="2008-02" db="EMBL/GenBank/DDBJ databases">
        <title>Complete sequence of Escherichia coli C str. ATCC 8739.</title>
        <authorList>
            <person name="Copeland A."/>
            <person name="Lucas S."/>
            <person name="Lapidus A."/>
            <person name="Glavina del Rio T."/>
            <person name="Dalin E."/>
            <person name="Tice H."/>
            <person name="Bruce D."/>
            <person name="Goodwin L."/>
            <person name="Pitluck S."/>
            <person name="Kiss H."/>
            <person name="Brettin T."/>
            <person name="Detter J.C."/>
            <person name="Han C."/>
            <person name="Kuske C.R."/>
            <person name="Schmutz J."/>
            <person name="Larimer F."/>
            <person name="Land M."/>
            <person name="Hauser L."/>
            <person name="Kyrpides N."/>
            <person name="Mikhailova N."/>
            <person name="Ingram L."/>
            <person name="Richardson P."/>
        </authorList>
    </citation>
    <scope>NUCLEOTIDE SEQUENCE [LARGE SCALE GENOMIC DNA]</scope>
    <source>
        <strain>ATCC 8739 / DSM 1576 / NBRC 3972 / NCIMB 8545 / WDCM 00012 / Crooks</strain>
    </source>
</reference>
<name>MDTD_ECOLC</name>
<comment type="subcellular location">
    <subcellularLocation>
        <location evidence="1">Cell inner membrane</location>
        <topology evidence="1">Multi-pass membrane protein</topology>
    </subcellularLocation>
</comment>
<comment type="similarity">
    <text evidence="1">Belongs to the major facilitator superfamily. TCR/Tet family.</text>
</comment>
<dbReference type="EMBL" id="CP000946">
    <property type="protein sequence ID" value="ACA77223.1"/>
    <property type="molecule type" value="Genomic_DNA"/>
</dbReference>
<dbReference type="RefSeq" id="WP_000130850.1">
    <property type="nucleotide sequence ID" value="NZ_MTFT01000031.1"/>
</dbReference>
<dbReference type="SMR" id="B1IYZ7"/>
<dbReference type="KEGG" id="ecl:EcolC_1564"/>
<dbReference type="HOGENOM" id="CLU_000960_28_0_6"/>
<dbReference type="GO" id="GO:0005886">
    <property type="term" value="C:plasma membrane"/>
    <property type="evidence" value="ECO:0007669"/>
    <property type="project" value="UniProtKB-SubCell"/>
</dbReference>
<dbReference type="GO" id="GO:0022857">
    <property type="term" value="F:transmembrane transporter activity"/>
    <property type="evidence" value="ECO:0007669"/>
    <property type="project" value="UniProtKB-UniRule"/>
</dbReference>
<dbReference type="CDD" id="cd17503">
    <property type="entry name" value="MFS_LmrB_MDR_like"/>
    <property type="match status" value="1"/>
</dbReference>
<dbReference type="FunFam" id="1.20.1250.20:FF:000021">
    <property type="entry name" value="Putative multidrug resistance protein MdtD"/>
    <property type="match status" value="1"/>
</dbReference>
<dbReference type="FunFam" id="1.20.1720.10:FF:000001">
    <property type="entry name" value="Putative multidrug resistance protein MdtD"/>
    <property type="match status" value="1"/>
</dbReference>
<dbReference type="Gene3D" id="1.20.1250.20">
    <property type="entry name" value="MFS general substrate transporter like domains"/>
    <property type="match status" value="1"/>
</dbReference>
<dbReference type="Gene3D" id="1.20.1720.10">
    <property type="entry name" value="Multidrug resistance protein D"/>
    <property type="match status" value="1"/>
</dbReference>
<dbReference type="HAMAP" id="MF_01577">
    <property type="entry name" value="MFS_MdtD"/>
    <property type="match status" value="1"/>
</dbReference>
<dbReference type="InterPro" id="IPR004638">
    <property type="entry name" value="EmrB-like"/>
</dbReference>
<dbReference type="InterPro" id="IPR011701">
    <property type="entry name" value="MFS"/>
</dbReference>
<dbReference type="InterPro" id="IPR020846">
    <property type="entry name" value="MFS_dom"/>
</dbReference>
<dbReference type="InterPro" id="IPR036259">
    <property type="entry name" value="MFS_trans_sf"/>
</dbReference>
<dbReference type="InterPro" id="IPR023721">
    <property type="entry name" value="Multi-R_MdtD"/>
</dbReference>
<dbReference type="NCBIfam" id="TIGR00711">
    <property type="entry name" value="efflux_EmrB"/>
    <property type="match status" value="1"/>
</dbReference>
<dbReference type="NCBIfam" id="NF007799">
    <property type="entry name" value="PRK10504.1"/>
    <property type="match status" value="1"/>
</dbReference>
<dbReference type="PANTHER" id="PTHR42718:SF46">
    <property type="entry name" value="BLR6921 PROTEIN"/>
    <property type="match status" value="1"/>
</dbReference>
<dbReference type="PANTHER" id="PTHR42718">
    <property type="entry name" value="MAJOR FACILITATOR SUPERFAMILY MULTIDRUG TRANSPORTER MFSC"/>
    <property type="match status" value="1"/>
</dbReference>
<dbReference type="Pfam" id="PF07690">
    <property type="entry name" value="MFS_1"/>
    <property type="match status" value="1"/>
</dbReference>
<dbReference type="PRINTS" id="PR01036">
    <property type="entry name" value="TCRTETB"/>
</dbReference>
<dbReference type="SUPFAM" id="SSF103473">
    <property type="entry name" value="MFS general substrate transporter"/>
    <property type="match status" value="1"/>
</dbReference>
<dbReference type="PROSITE" id="PS50850">
    <property type="entry name" value="MFS"/>
    <property type="match status" value="1"/>
</dbReference>
<proteinExistence type="inferred from homology"/>
<sequence>MTDLPDSTRWQLWIVAFGFFMQSLDTTIVNTALPSMAQSLGESPLHMHMVIVSYVLTVAVMLPASGWLADKVGVRNIFFTAIVLFTLGSLFCALSGTLNELLLARALQGVGGAMMVPVGRLTVMKIVPREQYMAAMTFVTLPGQVGPLLGPALGGLLVEYASWHWIFLINIPVGIIGAIATLLLMPNYTMQTRRFDLSGFLLLAVGMAVLTLALDGSKGTGLSPLTIAGLVAVGVVALVLYLLHARNNNRALFSLKLFRTRTFSLGLAGSFAGRIGSGMLPFMTPVFLQIGLGFSPFHAGLMMIPMVLGSMGMKRIVVQVVNRFGYRRVLVATTLGLSLVTLLFMTTALLGWYYVLPFVLFLQGMVNSTRFSSMNTLTLKDLPDNLASSGNSLLSMIMQLSMSIGVTIAGLLLGLFGSQHVSVDSGTTQTVFMYTWLSMALIIALPAFIFARVPNDTHQNVAISRRKRSAQ</sequence>
<evidence type="ECO:0000255" key="1">
    <source>
        <dbReference type="HAMAP-Rule" id="MF_01577"/>
    </source>
</evidence>
<gene>
    <name evidence="1" type="primary">mdtD</name>
    <name type="ordered locus">EcolC_1564</name>
</gene>